<sequence length="103" mass="11504">MTLRDLINKLLGRQQASAARARERLQLVLAHDRTDLSPDLLDQMREEILSVVAKYVEIDVEEGAVSLETEDRMTALVANLPIKRTLSGDIKLKEQSTESSASK</sequence>
<comment type="function">
    <text evidence="1">Prevents the cell division inhibition by proteins MinC and MinD at internal division sites while permitting inhibition at polar sites. This ensures cell division at the proper site by restricting the formation of a division septum at the midpoint of the long axis of the cell.</text>
</comment>
<comment type="similarity">
    <text evidence="1">Belongs to the MinE family.</text>
</comment>
<accession>A9BDX7</accession>
<organism>
    <name type="scientific">Prochlorococcus marinus (strain MIT 9211)</name>
    <dbReference type="NCBI Taxonomy" id="93059"/>
    <lineage>
        <taxon>Bacteria</taxon>
        <taxon>Bacillati</taxon>
        <taxon>Cyanobacteriota</taxon>
        <taxon>Cyanophyceae</taxon>
        <taxon>Synechococcales</taxon>
        <taxon>Prochlorococcaceae</taxon>
        <taxon>Prochlorococcus</taxon>
    </lineage>
</organism>
<keyword id="KW-0131">Cell cycle</keyword>
<keyword id="KW-0132">Cell division</keyword>
<keyword id="KW-1185">Reference proteome</keyword>
<name>MINE_PROM4</name>
<gene>
    <name evidence="1" type="primary">minE</name>
    <name type="ordered locus">P9211_03561</name>
</gene>
<feature type="chain" id="PRO_1000114232" description="Cell division topological specificity factor">
    <location>
        <begin position="1"/>
        <end position="103"/>
    </location>
</feature>
<proteinExistence type="inferred from homology"/>
<dbReference type="EMBL" id="CP000878">
    <property type="protein sequence ID" value="ABX08287.1"/>
    <property type="molecule type" value="Genomic_DNA"/>
</dbReference>
<dbReference type="RefSeq" id="WP_012194911.1">
    <property type="nucleotide sequence ID" value="NC_009976.1"/>
</dbReference>
<dbReference type="SMR" id="A9BDX7"/>
<dbReference type="STRING" id="93059.P9211_03561"/>
<dbReference type="KEGG" id="pmj:P9211_03561"/>
<dbReference type="eggNOG" id="COG0851">
    <property type="taxonomic scope" value="Bacteria"/>
</dbReference>
<dbReference type="HOGENOM" id="CLU_137929_1_1_3"/>
<dbReference type="OrthoDB" id="9796578at2"/>
<dbReference type="Proteomes" id="UP000000788">
    <property type="component" value="Chromosome"/>
</dbReference>
<dbReference type="GO" id="GO:0051301">
    <property type="term" value="P:cell division"/>
    <property type="evidence" value="ECO:0007669"/>
    <property type="project" value="UniProtKB-KW"/>
</dbReference>
<dbReference type="GO" id="GO:0032955">
    <property type="term" value="P:regulation of division septum assembly"/>
    <property type="evidence" value="ECO:0007669"/>
    <property type="project" value="InterPro"/>
</dbReference>
<dbReference type="Gene3D" id="3.30.1070.10">
    <property type="entry name" value="Cell division topological specificity factor MinE"/>
    <property type="match status" value="1"/>
</dbReference>
<dbReference type="HAMAP" id="MF_00262">
    <property type="entry name" value="MinE"/>
    <property type="match status" value="1"/>
</dbReference>
<dbReference type="InterPro" id="IPR005527">
    <property type="entry name" value="MinE"/>
</dbReference>
<dbReference type="InterPro" id="IPR036707">
    <property type="entry name" value="MinE_sf"/>
</dbReference>
<dbReference type="NCBIfam" id="TIGR01215">
    <property type="entry name" value="minE"/>
    <property type="match status" value="1"/>
</dbReference>
<dbReference type="NCBIfam" id="NF001422">
    <property type="entry name" value="PRK00296.1"/>
    <property type="match status" value="1"/>
</dbReference>
<dbReference type="Pfam" id="PF03776">
    <property type="entry name" value="MinE"/>
    <property type="match status" value="1"/>
</dbReference>
<dbReference type="SUPFAM" id="SSF55229">
    <property type="entry name" value="Cell division protein MinE topological specificity domain"/>
    <property type="match status" value="1"/>
</dbReference>
<reference key="1">
    <citation type="journal article" date="2007" name="PLoS Genet.">
        <title>Patterns and implications of gene gain and loss in the evolution of Prochlorococcus.</title>
        <authorList>
            <person name="Kettler G.C."/>
            <person name="Martiny A.C."/>
            <person name="Huang K."/>
            <person name="Zucker J."/>
            <person name="Coleman M.L."/>
            <person name="Rodrigue S."/>
            <person name="Chen F."/>
            <person name="Lapidus A."/>
            <person name="Ferriera S."/>
            <person name="Johnson J."/>
            <person name="Steglich C."/>
            <person name="Church G.M."/>
            <person name="Richardson P."/>
            <person name="Chisholm S.W."/>
        </authorList>
    </citation>
    <scope>NUCLEOTIDE SEQUENCE [LARGE SCALE GENOMIC DNA]</scope>
    <source>
        <strain>MIT 9211</strain>
    </source>
</reference>
<protein>
    <recommendedName>
        <fullName evidence="1">Cell division topological specificity factor</fullName>
    </recommendedName>
</protein>
<evidence type="ECO:0000255" key="1">
    <source>
        <dbReference type="HAMAP-Rule" id="MF_00262"/>
    </source>
</evidence>